<reference key="1">
    <citation type="journal article" date="2000" name="Infect. Immun.">
        <title>Characterization of PaxA and its operon: a cohemolytic RTX toxin determinant from pathogenic Pasteurella aerogenes.</title>
        <authorList>
            <person name="Kuhnert P."/>
            <person name="Heyberger-Meyer B."/>
            <person name="Nicolet J."/>
            <person name="Frey J."/>
        </authorList>
    </citation>
    <scope>NUCLEOTIDE SEQUENCE [GENOMIC DNA]</scope>
    <source>
        <strain>JF1319</strain>
    </source>
</reference>
<evidence type="ECO:0000250" key="1"/>
<evidence type="ECO:0000255" key="2">
    <source>
        <dbReference type="PROSITE-ProRule" id="PRU00362"/>
    </source>
</evidence>
<evidence type="ECO:0000255" key="3">
    <source>
        <dbReference type="PROSITE-ProRule" id="PRU00434"/>
    </source>
</evidence>
<evidence type="ECO:0000255" key="4">
    <source>
        <dbReference type="PROSITE-ProRule" id="PRU00441"/>
    </source>
</evidence>
<evidence type="ECO:0000305" key="5"/>
<dbReference type="EC" id="7.4.2.5"/>
<dbReference type="EMBL" id="U66588">
    <property type="protein sequence ID" value="AAF15371.1"/>
    <property type="molecule type" value="Genomic_DNA"/>
</dbReference>
<dbReference type="SMR" id="Q9RCG7"/>
<dbReference type="GO" id="GO:0005886">
    <property type="term" value="C:plasma membrane"/>
    <property type="evidence" value="ECO:0007669"/>
    <property type="project" value="UniProtKB-SubCell"/>
</dbReference>
<dbReference type="GO" id="GO:0030256">
    <property type="term" value="C:type I protein secretion system complex"/>
    <property type="evidence" value="ECO:0007669"/>
    <property type="project" value="InterPro"/>
</dbReference>
<dbReference type="GO" id="GO:0140359">
    <property type="term" value="F:ABC-type transporter activity"/>
    <property type="evidence" value="ECO:0007669"/>
    <property type="project" value="InterPro"/>
</dbReference>
<dbReference type="GO" id="GO:0005524">
    <property type="term" value="F:ATP binding"/>
    <property type="evidence" value="ECO:0007669"/>
    <property type="project" value="UniProtKB-KW"/>
</dbReference>
<dbReference type="GO" id="GO:0016887">
    <property type="term" value="F:ATP hydrolysis activity"/>
    <property type="evidence" value="ECO:0007669"/>
    <property type="project" value="InterPro"/>
</dbReference>
<dbReference type="GO" id="GO:0034040">
    <property type="term" value="F:ATPase-coupled lipid transmembrane transporter activity"/>
    <property type="evidence" value="ECO:0007669"/>
    <property type="project" value="TreeGrafter"/>
</dbReference>
<dbReference type="GO" id="GO:0008233">
    <property type="term" value="F:peptidase activity"/>
    <property type="evidence" value="ECO:0007669"/>
    <property type="project" value="InterPro"/>
</dbReference>
<dbReference type="GO" id="GO:0030253">
    <property type="term" value="P:protein secretion by the type I secretion system"/>
    <property type="evidence" value="ECO:0007669"/>
    <property type="project" value="InterPro"/>
</dbReference>
<dbReference type="GO" id="GO:0006508">
    <property type="term" value="P:proteolysis"/>
    <property type="evidence" value="ECO:0007669"/>
    <property type="project" value="InterPro"/>
</dbReference>
<dbReference type="CDD" id="cd18588">
    <property type="entry name" value="ABC_6TM_CyaB_HlyB_like"/>
    <property type="match status" value="1"/>
</dbReference>
<dbReference type="CDD" id="cd03252">
    <property type="entry name" value="ABCC_Hemolysin"/>
    <property type="match status" value="1"/>
</dbReference>
<dbReference type="CDD" id="cd02417">
    <property type="entry name" value="Peptidase_C39_likeA"/>
    <property type="match status" value="1"/>
</dbReference>
<dbReference type="FunFam" id="3.40.50.300:FF:000299">
    <property type="entry name" value="ABC transporter ATP-binding protein/permease"/>
    <property type="match status" value="1"/>
</dbReference>
<dbReference type="FunFam" id="1.20.1560.10:FF:000056">
    <property type="entry name" value="Alpha-hemolysin translocation ATP-binding protein HlyB"/>
    <property type="match status" value="1"/>
</dbReference>
<dbReference type="Gene3D" id="1.20.1560.10">
    <property type="entry name" value="ABC transporter type 1, transmembrane domain"/>
    <property type="match status" value="1"/>
</dbReference>
<dbReference type="Gene3D" id="3.90.70.10">
    <property type="entry name" value="Cysteine proteinases"/>
    <property type="match status" value="1"/>
</dbReference>
<dbReference type="Gene3D" id="3.40.50.300">
    <property type="entry name" value="P-loop containing nucleotide triphosphate hydrolases"/>
    <property type="match status" value="1"/>
</dbReference>
<dbReference type="InterPro" id="IPR003593">
    <property type="entry name" value="AAA+_ATPase"/>
</dbReference>
<dbReference type="InterPro" id="IPR011527">
    <property type="entry name" value="ABC1_TM_dom"/>
</dbReference>
<dbReference type="InterPro" id="IPR036640">
    <property type="entry name" value="ABC1_TM_sf"/>
</dbReference>
<dbReference type="InterPro" id="IPR003439">
    <property type="entry name" value="ABC_transporter-like_ATP-bd"/>
</dbReference>
<dbReference type="InterPro" id="IPR017871">
    <property type="entry name" value="ABC_transporter-like_CS"/>
</dbReference>
<dbReference type="InterPro" id="IPR010132">
    <property type="entry name" value="ATPase_T1SS_HlyB"/>
</dbReference>
<dbReference type="InterPro" id="IPR027417">
    <property type="entry name" value="P-loop_NTPase"/>
</dbReference>
<dbReference type="InterPro" id="IPR005074">
    <property type="entry name" value="Peptidase_C39"/>
</dbReference>
<dbReference type="InterPro" id="IPR039395">
    <property type="entry name" value="Peptidase_C39-like_A"/>
</dbReference>
<dbReference type="InterPro" id="IPR039421">
    <property type="entry name" value="Type_1_exporter"/>
</dbReference>
<dbReference type="NCBIfam" id="TIGR01846">
    <property type="entry name" value="type_I_sec_HlyB"/>
    <property type="match status" value="1"/>
</dbReference>
<dbReference type="PANTHER" id="PTHR24221">
    <property type="entry name" value="ATP-BINDING CASSETTE SUB-FAMILY B"/>
    <property type="match status" value="1"/>
</dbReference>
<dbReference type="PANTHER" id="PTHR24221:SF647">
    <property type="entry name" value="BLL6336 PROTEIN"/>
    <property type="match status" value="1"/>
</dbReference>
<dbReference type="Pfam" id="PF00664">
    <property type="entry name" value="ABC_membrane"/>
    <property type="match status" value="1"/>
</dbReference>
<dbReference type="Pfam" id="PF00005">
    <property type="entry name" value="ABC_tran"/>
    <property type="match status" value="1"/>
</dbReference>
<dbReference type="Pfam" id="PF03412">
    <property type="entry name" value="Peptidase_C39"/>
    <property type="match status" value="1"/>
</dbReference>
<dbReference type="SMART" id="SM00382">
    <property type="entry name" value="AAA"/>
    <property type="match status" value="1"/>
</dbReference>
<dbReference type="SUPFAM" id="SSF90123">
    <property type="entry name" value="ABC transporter transmembrane region"/>
    <property type="match status" value="1"/>
</dbReference>
<dbReference type="SUPFAM" id="SSF52540">
    <property type="entry name" value="P-loop containing nucleoside triphosphate hydrolases"/>
    <property type="match status" value="1"/>
</dbReference>
<dbReference type="PROSITE" id="PS50929">
    <property type="entry name" value="ABC_TM1F"/>
    <property type="match status" value="1"/>
</dbReference>
<dbReference type="PROSITE" id="PS00211">
    <property type="entry name" value="ABC_TRANSPORTER_1"/>
    <property type="match status" value="1"/>
</dbReference>
<dbReference type="PROSITE" id="PS50893">
    <property type="entry name" value="ABC_TRANSPORTER_2"/>
    <property type="match status" value="1"/>
</dbReference>
<dbReference type="PROSITE" id="PS50990">
    <property type="entry name" value="PEPTIDASE_C39"/>
    <property type="match status" value="1"/>
</dbReference>
<accession>Q9RCG7</accession>
<sequence length="711" mass="80424">MEPLMSFKQKNDYGLHALVILAQYHNIAVSPEEIKHKFDPEGKGIDLVAWLLAAKSFELKAKKVKKSIDRLPFIHLPALIWRDDGQHFILTKIDTQTNRYLIFDLEERNPKVLSAVEFQQVFQGNVILLTSRASIMGKLAKFDFTWFIPAIIKYRKIFVEVMIVSIFLQLFALITPLFFQVVMDKVLVHRGFSTLNVITVALAIVVIFEIVLSGLRTYVFSHSTSRIDVELGAKLFRHLLALPISYFENRRVGDTVARVRELDQIRNFLTGQALTSVLDLLFSFIFFAVMWYYSPKLTIVILLSLPCYIAWSIFISPILRRRLDEKFTRNADNQAFLVESVTAIDTIKALAVTPQMTNIWDKQLASYVSADFRVTVLATIGQQGVQLIQKTVMIINLWLGAHLVISGDLSIGQLIAFNMLSGQVIAPVIRLAQLWQDFQQVGISITRLGDVLNAPTENFQGKLSLPEINGDVTFKNIRFRYKPDAPIILNDVNLTIKQGEVIGIVGRSGSGKSTLTKLLQRFYIPENGQVLIDGHDLALADPNWLRRQIGVVLQDNVLLNRSIRDNIALTDPSMPMEQVIHAAKLAGAHDFISELREGYNTMVGEQGAGLSGGQRQRIAIARALVNNPRILIFDEATSALDYESEHIIMRNMQQICHGRTVIIIAHRLSTVRKADRIIVMEKGHIVERGKHSELLENKDGLYYYLNQLQSI</sequence>
<comment type="function">
    <text evidence="5">Part of the ABC transporter complex PaxBD involved in PaxA export. Transmembrane domains (TMD) form a pore in the inner membrane and the ATP-binding domain (NBD) is responsible for energy generation (Probable).</text>
</comment>
<comment type="catalytic activity">
    <reaction>
        <text>ATP + H2O + proteinSide 1 = ADP + phosphate + proteinSide 2.</text>
        <dbReference type="EC" id="7.4.2.5"/>
    </reaction>
</comment>
<comment type="subunit">
    <text evidence="1">Homodimer.</text>
</comment>
<comment type="subcellular location">
    <subcellularLocation>
        <location evidence="5">Cell inner membrane</location>
        <topology evidence="5">Multi-pass membrane protein</topology>
    </subcellularLocation>
</comment>
<comment type="domain">
    <text>In PaxB the peptidase C39 domain, the ATP-binding domain (NBD) and the transmembrane domain (TMD) are fused.</text>
</comment>
<comment type="similarity">
    <text evidence="5">Belongs to the ABC transporter superfamily. Protein-1 exporter (TC 3.A.1.109) family.</text>
</comment>
<comment type="caution">
    <text evidence="5">Tyr-13 is present instead of the conserved Cys which is expected to be the active site residue of peptidase C39. Thus this protein is presumed to be without peptidase activity.</text>
</comment>
<keyword id="KW-0067">ATP-binding</keyword>
<keyword id="KW-0997">Cell inner membrane</keyword>
<keyword id="KW-1003">Cell membrane</keyword>
<keyword id="KW-0472">Membrane</keyword>
<keyword id="KW-0547">Nucleotide-binding</keyword>
<keyword id="KW-1278">Translocase</keyword>
<keyword id="KW-0812">Transmembrane</keyword>
<keyword id="KW-1133">Transmembrane helix</keyword>
<keyword id="KW-0813">Transport</keyword>
<feature type="chain" id="PRO_0000092389" description="Exotoxin translocation ATP-binding protein PaxB">
    <location>
        <begin position="1"/>
        <end position="711"/>
    </location>
</feature>
<feature type="transmembrane region" description="Helical" evidence="4">
    <location>
        <begin position="157"/>
        <end position="177"/>
    </location>
</feature>
<feature type="transmembrane region" description="Helical" evidence="4">
    <location>
        <begin position="195"/>
        <end position="215"/>
    </location>
</feature>
<feature type="transmembrane region" description="Helical" evidence="4">
    <location>
        <begin position="273"/>
        <end position="293"/>
    </location>
</feature>
<feature type="transmembrane region" description="Helical" evidence="4">
    <location>
        <begin position="299"/>
        <end position="319"/>
    </location>
</feature>
<feature type="transmembrane region" description="Helical" evidence="4">
    <location>
        <begin position="392"/>
        <end position="412"/>
    </location>
</feature>
<feature type="domain" description="Peptidase C39" evidence="2">
    <location>
        <begin position="1"/>
        <end position="129"/>
    </location>
</feature>
<feature type="domain" description="ABC transmembrane type-1" evidence="4">
    <location>
        <begin position="158"/>
        <end position="440"/>
    </location>
</feature>
<feature type="domain" description="ABC transporter" evidence="2 3">
    <location>
        <begin position="472"/>
        <end position="707"/>
    </location>
</feature>
<feature type="binding site" evidence="2 3">
    <location>
        <begin position="506"/>
        <end position="513"/>
    </location>
    <ligand>
        <name>ATP</name>
        <dbReference type="ChEBI" id="CHEBI:30616"/>
    </ligand>
</feature>
<name>PAXB_PASAE</name>
<proteinExistence type="inferred from homology"/>
<gene>
    <name type="primary">paxB</name>
</gene>
<protein>
    <recommendedName>
        <fullName>Exotoxin translocation ATP-binding protein PaxB</fullName>
        <ecNumber>7.4.2.5</ecNumber>
    </recommendedName>
</protein>
<organism>
    <name type="scientific">Pasteurella aerogenes</name>
    <dbReference type="NCBI Taxonomy" id="749"/>
    <lineage>
        <taxon>Bacteria</taxon>
        <taxon>Pseudomonadati</taxon>
        <taxon>Pseudomonadota</taxon>
        <taxon>Gammaproteobacteria</taxon>
        <taxon>Pasteurellales</taxon>
        <taxon>Pasteurellaceae</taxon>
    </lineage>
</organism>